<name>UBL4A_HUMAN</name>
<reference key="1">
    <citation type="journal article" date="1988" name="Proc. Natl. Acad. Sci. U.S.A.">
        <title>A 'housekeeping' gene on the X chromosome encodes a protein similar to ubiquitin.</title>
        <authorList>
            <person name="Toniolo D."/>
            <person name="Persico M."/>
            <person name="Alcalay M."/>
        </authorList>
    </citation>
    <scope>NUCLEOTIDE SEQUENCE [GENOMIC DNA]</scope>
</reference>
<reference key="2">
    <citation type="journal article" date="1996" name="Hum. Mol. Genet.">
        <title>Long-range sequence analysis in Xq28: thirteen known and six candidate genes in 219.4 kb of high GC DNA between the RCP/GCP and G6PD loci.</title>
        <authorList>
            <person name="Chen E.Y."/>
            <person name="Zollo M."/>
            <person name="Mazzarella R.A."/>
            <person name="Ciccodicola A."/>
            <person name="Chen C.-N."/>
            <person name="Zuo L."/>
            <person name="Heiner C."/>
            <person name="Burough F.W."/>
            <person name="Ripetto M."/>
            <person name="Schlessinger D."/>
            <person name="D'Urso M."/>
        </authorList>
    </citation>
    <scope>NUCLEOTIDE SEQUENCE [GENOMIC DNA]</scope>
</reference>
<reference key="3">
    <citation type="journal article" date="2005" name="Nature">
        <title>The DNA sequence of the human X chromosome.</title>
        <authorList>
            <person name="Ross M.T."/>
            <person name="Grafham D.V."/>
            <person name="Coffey A.J."/>
            <person name="Scherer S."/>
            <person name="McLay K."/>
            <person name="Muzny D."/>
            <person name="Platzer M."/>
            <person name="Howell G.R."/>
            <person name="Burrows C."/>
            <person name="Bird C.P."/>
            <person name="Frankish A."/>
            <person name="Lovell F.L."/>
            <person name="Howe K.L."/>
            <person name="Ashurst J.L."/>
            <person name="Fulton R.S."/>
            <person name="Sudbrak R."/>
            <person name="Wen G."/>
            <person name="Jones M.C."/>
            <person name="Hurles M.E."/>
            <person name="Andrews T.D."/>
            <person name="Scott C.E."/>
            <person name="Searle S."/>
            <person name="Ramser J."/>
            <person name="Whittaker A."/>
            <person name="Deadman R."/>
            <person name="Carter N.P."/>
            <person name="Hunt S.E."/>
            <person name="Chen R."/>
            <person name="Cree A."/>
            <person name="Gunaratne P."/>
            <person name="Havlak P."/>
            <person name="Hodgson A."/>
            <person name="Metzker M.L."/>
            <person name="Richards S."/>
            <person name="Scott G."/>
            <person name="Steffen D."/>
            <person name="Sodergren E."/>
            <person name="Wheeler D.A."/>
            <person name="Worley K.C."/>
            <person name="Ainscough R."/>
            <person name="Ambrose K.D."/>
            <person name="Ansari-Lari M.A."/>
            <person name="Aradhya S."/>
            <person name="Ashwell R.I."/>
            <person name="Babbage A.K."/>
            <person name="Bagguley C.L."/>
            <person name="Ballabio A."/>
            <person name="Banerjee R."/>
            <person name="Barker G.E."/>
            <person name="Barlow K.F."/>
            <person name="Barrett I.P."/>
            <person name="Bates K.N."/>
            <person name="Beare D.M."/>
            <person name="Beasley H."/>
            <person name="Beasley O."/>
            <person name="Beck A."/>
            <person name="Bethel G."/>
            <person name="Blechschmidt K."/>
            <person name="Brady N."/>
            <person name="Bray-Allen S."/>
            <person name="Bridgeman A.M."/>
            <person name="Brown A.J."/>
            <person name="Brown M.J."/>
            <person name="Bonnin D."/>
            <person name="Bruford E.A."/>
            <person name="Buhay C."/>
            <person name="Burch P."/>
            <person name="Burford D."/>
            <person name="Burgess J."/>
            <person name="Burrill W."/>
            <person name="Burton J."/>
            <person name="Bye J.M."/>
            <person name="Carder C."/>
            <person name="Carrel L."/>
            <person name="Chako J."/>
            <person name="Chapman J.C."/>
            <person name="Chavez D."/>
            <person name="Chen E."/>
            <person name="Chen G."/>
            <person name="Chen Y."/>
            <person name="Chen Z."/>
            <person name="Chinault C."/>
            <person name="Ciccodicola A."/>
            <person name="Clark S.Y."/>
            <person name="Clarke G."/>
            <person name="Clee C.M."/>
            <person name="Clegg S."/>
            <person name="Clerc-Blankenburg K."/>
            <person name="Clifford K."/>
            <person name="Cobley V."/>
            <person name="Cole C.G."/>
            <person name="Conquer J.S."/>
            <person name="Corby N."/>
            <person name="Connor R.E."/>
            <person name="David R."/>
            <person name="Davies J."/>
            <person name="Davis C."/>
            <person name="Davis J."/>
            <person name="Delgado O."/>
            <person name="Deshazo D."/>
            <person name="Dhami P."/>
            <person name="Ding Y."/>
            <person name="Dinh H."/>
            <person name="Dodsworth S."/>
            <person name="Draper H."/>
            <person name="Dugan-Rocha S."/>
            <person name="Dunham A."/>
            <person name="Dunn M."/>
            <person name="Durbin K.J."/>
            <person name="Dutta I."/>
            <person name="Eades T."/>
            <person name="Ellwood M."/>
            <person name="Emery-Cohen A."/>
            <person name="Errington H."/>
            <person name="Evans K.L."/>
            <person name="Faulkner L."/>
            <person name="Francis F."/>
            <person name="Frankland J."/>
            <person name="Fraser A.E."/>
            <person name="Galgoczy P."/>
            <person name="Gilbert J."/>
            <person name="Gill R."/>
            <person name="Gloeckner G."/>
            <person name="Gregory S.G."/>
            <person name="Gribble S."/>
            <person name="Griffiths C."/>
            <person name="Grocock R."/>
            <person name="Gu Y."/>
            <person name="Gwilliam R."/>
            <person name="Hamilton C."/>
            <person name="Hart E.A."/>
            <person name="Hawes A."/>
            <person name="Heath P.D."/>
            <person name="Heitmann K."/>
            <person name="Hennig S."/>
            <person name="Hernandez J."/>
            <person name="Hinzmann B."/>
            <person name="Ho S."/>
            <person name="Hoffs M."/>
            <person name="Howden P.J."/>
            <person name="Huckle E.J."/>
            <person name="Hume J."/>
            <person name="Hunt P.J."/>
            <person name="Hunt A.R."/>
            <person name="Isherwood J."/>
            <person name="Jacob L."/>
            <person name="Johnson D."/>
            <person name="Jones S."/>
            <person name="de Jong P.J."/>
            <person name="Joseph S.S."/>
            <person name="Keenan S."/>
            <person name="Kelly S."/>
            <person name="Kershaw J.K."/>
            <person name="Khan Z."/>
            <person name="Kioschis P."/>
            <person name="Klages S."/>
            <person name="Knights A.J."/>
            <person name="Kosiura A."/>
            <person name="Kovar-Smith C."/>
            <person name="Laird G.K."/>
            <person name="Langford C."/>
            <person name="Lawlor S."/>
            <person name="Leversha M."/>
            <person name="Lewis L."/>
            <person name="Liu W."/>
            <person name="Lloyd C."/>
            <person name="Lloyd D.M."/>
            <person name="Loulseged H."/>
            <person name="Loveland J.E."/>
            <person name="Lovell J.D."/>
            <person name="Lozado R."/>
            <person name="Lu J."/>
            <person name="Lyne R."/>
            <person name="Ma J."/>
            <person name="Maheshwari M."/>
            <person name="Matthews L.H."/>
            <person name="McDowall J."/>
            <person name="McLaren S."/>
            <person name="McMurray A."/>
            <person name="Meidl P."/>
            <person name="Meitinger T."/>
            <person name="Milne S."/>
            <person name="Miner G."/>
            <person name="Mistry S.L."/>
            <person name="Morgan M."/>
            <person name="Morris S."/>
            <person name="Mueller I."/>
            <person name="Mullikin J.C."/>
            <person name="Nguyen N."/>
            <person name="Nordsiek G."/>
            <person name="Nyakatura G."/>
            <person name="O'dell C.N."/>
            <person name="Okwuonu G."/>
            <person name="Palmer S."/>
            <person name="Pandian R."/>
            <person name="Parker D."/>
            <person name="Parrish J."/>
            <person name="Pasternak S."/>
            <person name="Patel D."/>
            <person name="Pearce A.V."/>
            <person name="Pearson D.M."/>
            <person name="Pelan S.E."/>
            <person name="Perez L."/>
            <person name="Porter K.M."/>
            <person name="Ramsey Y."/>
            <person name="Reichwald K."/>
            <person name="Rhodes S."/>
            <person name="Ridler K.A."/>
            <person name="Schlessinger D."/>
            <person name="Schueler M.G."/>
            <person name="Sehra H.K."/>
            <person name="Shaw-Smith C."/>
            <person name="Shen H."/>
            <person name="Sheridan E.M."/>
            <person name="Shownkeen R."/>
            <person name="Skuce C.D."/>
            <person name="Smith M.L."/>
            <person name="Sotheran E.C."/>
            <person name="Steingruber H.E."/>
            <person name="Steward C.A."/>
            <person name="Storey R."/>
            <person name="Swann R.M."/>
            <person name="Swarbreck D."/>
            <person name="Tabor P.E."/>
            <person name="Taudien S."/>
            <person name="Taylor T."/>
            <person name="Teague B."/>
            <person name="Thomas K."/>
            <person name="Thorpe A."/>
            <person name="Timms K."/>
            <person name="Tracey A."/>
            <person name="Trevanion S."/>
            <person name="Tromans A.C."/>
            <person name="d'Urso M."/>
            <person name="Verduzco D."/>
            <person name="Villasana D."/>
            <person name="Waldron L."/>
            <person name="Wall M."/>
            <person name="Wang Q."/>
            <person name="Warren J."/>
            <person name="Warry G.L."/>
            <person name="Wei X."/>
            <person name="West A."/>
            <person name="Whitehead S.L."/>
            <person name="Whiteley M.N."/>
            <person name="Wilkinson J.E."/>
            <person name="Willey D.L."/>
            <person name="Williams G."/>
            <person name="Williams L."/>
            <person name="Williamson A."/>
            <person name="Williamson H."/>
            <person name="Wilming L."/>
            <person name="Woodmansey R.L."/>
            <person name="Wray P.W."/>
            <person name="Yen J."/>
            <person name="Zhang J."/>
            <person name="Zhou J."/>
            <person name="Zoghbi H."/>
            <person name="Zorilla S."/>
            <person name="Buck D."/>
            <person name="Reinhardt R."/>
            <person name="Poustka A."/>
            <person name="Rosenthal A."/>
            <person name="Lehrach H."/>
            <person name="Meindl A."/>
            <person name="Minx P.J."/>
            <person name="Hillier L.W."/>
            <person name="Willard H.F."/>
            <person name="Wilson R.K."/>
            <person name="Waterston R.H."/>
            <person name="Rice C.M."/>
            <person name="Vaudin M."/>
            <person name="Coulson A."/>
            <person name="Nelson D.L."/>
            <person name="Weinstock G."/>
            <person name="Sulston J.E."/>
            <person name="Durbin R.M."/>
            <person name="Hubbard T."/>
            <person name="Gibbs R.A."/>
            <person name="Beck S."/>
            <person name="Rogers J."/>
            <person name="Bentley D.R."/>
        </authorList>
    </citation>
    <scope>NUCLEOTIDE SEQUENCE [LARGE SCALE GENOMIC DNA]</scope>
</reference>
<reference key="4">
    <citation type="submission" date="2005-09" db="EMBL/GenBank/DDBJ databases">
        <authorList>
            <person name="Mural R.J."/>
            <person name="Istrail S."/>
            <person name="Sutton G.G."/>
            <person name="Florea L."/>
            <person name="Halpern A.L."/>
            <person name="Mobarry C.M."/>
            <person name="Lippert R."/>
            <person name="Walenz B."/>
            <person name="Shatkay H."/>
            <person name="Dew I."/>
            <person name="Miller J.R."/>
            <person name="Flanigan M.J."/>
            <person name="Edwards N.J."/>
            <person name="Bolanos R."/>
            <person name="Fasulo D."/>
            <person name="Halldorsson B.V."/>
            <person name="Hannenhalli S."/>
            <person name="Turner R."/>
            <person name="Yooseph S."/>
            <person name="Lu F."/>
            <person name="Nusskern D.R."/>
            <person name="Shue B.C."/>
            <person name="Zheng X.H."/>
            <person name="Zhong F."/>
            <person name="Delcher A.L."/>
            <person name="Huson D.H."/>
            <person name="Kravitz S.A."/>
            <person name="Mouchard L."/>
            <person name="Reinert K."/>
            <person name="Remington K.A."/>
            <person name="Clark A.G."/>
            <person name="Waterman M.S."/>
            <person name="Eichler E.E."/>
            <person name="Adams M.D."/>
            <person name="Hunkapiller M.W."/>
            <person name="Myers E.W."/>
            <person name="Venter J.C."/>
        </authorList>
    </citation>
    <scope>NUCLEOTIDE SEQUENCE [LARGE SCALE GENOMIC DNA]</scope>
</reference>
<reference key="5">
    <citation type="journal article" date="2004" name="Genome Res.">
        <title>The status, quality, and expansion of the NIH full-length cDNA project: the Mammalian Gene Collection (MGC).</title>
        <authorList>
            <consortium name="The MGC Project Team"/>
        </authorList>
    </citation>
    <scope>NUCLEOTIDE SEQUENCE [LARGE SCALE MRNA]</scope>
    <source>
        <tissue>Brain</tissue>
        <tissue>Lung</tissue>
    </source>
</reference>
<reference key="6">
    <citation type="journal article" date="2008" name="Proc. Natl. Acad. Sci. U.S.A.">
        <title>A quantitative atlas of mitotic phosphorylation.</title>
        <authorList>
            <person name="Dephoure N."/>
            <person name="Zhou C."/>
            <person name="Villen J."/>
            <person name="Beausoleil S.A."/>
            <person name="Bakalarski C.E."/>
            <person name="Elledge S.J."/>
            <person name="Gygi S.P."/>
        </authorList>
    </citation>
    <scope>PHOSPHORYLATION [LARGE SCALE ANALYSIS] AT SER-90</scope>
    <scope>IDENTIFICATION BY MASS SPECTROMETRY [LARGE SCALE ANALYSIS]</scope>
    <source>
        <tissue>Cervix carcinoma</tissue>
    </source>
</reference>
<reference key="7">
    <citation type="journal article" date="2009" name="Sci. Signal.">
        <title>Quantitative phosphoproteomic analysis of T cell receptor signaling reveals system-wide modulation of protein-protein interactions.</title>
        <authorList>
            <person name="Mayya V."/>
            <person name="Lundgren D.H."/>
            <person name="Hwang S.-I."/>
            <person name="Rezaul K."/>
            <person name="Wu L."/>
            <person name="Eng J.K."/>
            <person name="Rodionov V."/>
            <person name="Han D.K."/>
        </authorList>
    </citation>
    <scope>PHOSPHORYLATION [LARGE SCALE ANALYSIS] AT SER-90</scope>
    <scope>IDENTIFICATION BY MASS SPECTROMETRY [LARGE SCALE ANALYSIS]</scope>
    <source>
        <tissue>Leukemic T-cell</tissue>
    </source>
</reference>
<reference key="8">
    <citation type="journal article" date="2010" name="Nature">
        <title>A ribosome-associating factor chaperones tail-anchored membrane proteins.</title>
        <authorList>
            <person name="Mariappan M."/>
            <person name="Li X."/>
            <person name="Stefanovic S."/>
            <person name="Sharma A."/>
            <person name="Mateja A."/>
            <person name="Keenan R.J."/>
            <person name="Hegde R.S."/>
        </authorList>
    </citation>
    <scope>FUNCTION</scope>
    <scope>SUBCELLULAR LOCATION</scope>
    <scope>IDENTIFICATION BY MASS SPECTROMETRY</scope>
    <scope>IDENTIFICATION IN THE BAG6/BAT3 COMPLEX</scope>
</reference>
<reference key="9">
    <citation type="journal article" date="2010" name="Sci. Signal.">
        <title>Quantitative phosphoproteomics reveals widespread full phosphorylation site occupancy during mitosis.</title>
        <authorList>
            <person name="Olsen J.V."/>
            <person name="Vermeulen M."/>
            <person name="Santamaria A."/>
            <person name="Kumar C."/>
            <person name="Miller M.L."/>
            <person name="Jensen L.J."/>
            <person name="Gnad F."/>
            <person name="Cox J."/>
            <person name="Jensen T.S."/>
            <person name="Nigg E.A."/>
            <person name="Brunak S."/>
            <person name="Mann M."/>
        </authorList>
    </citation>
    <scope>PHOSPHORYLATION [LARGE SCALE ANALYSIS] AT SER-90</scope>
    <scope>IDENTIFICATION BY MASS SPECTROMETRY [LARGE SCALE ANALYSIS]</scope>
    <source>
        <tissue>Cervix carcinoma</tissue>
    </source>
</reference>
<reference key="10">
    <citation type="journal article" date="2011" name="BMC Syst. Biol.">
        <title>Initial characterization of the human central proteome.</title>
        <authorList>
            <person name="Burkard T.R."/>
            <person name="Planyavsky M."/>
            <person name="Kaupe I."/>
            <person name="Breitwieser F.P."/>
            <person name="Buerckstuemmer T."/>
            <person name="Bennett K.L."/>
            <person name="Superti-Furga G."/>
            <person name="Colinge J."/>
        </authorList>
    </citation>
    <scope>IDENTIFICATION BY MASS SPECTROMETRY [LARGE SCALE ANALYSIS]</scope>
</reference>
<reference key="11">
    <citation type="journal article" date="2011" name="Mol. Cell">
        <title>A ubiquitin ligase-associated chaperone holdase maintains polypeptides in soluble states for proteasome degradation.</title>
        <authorList>
            <person name="Wang Q."/>
            <person name="Liu Y."/>
            <person name="Soetandyo N."/>
            <person name="Baek K."/>
            <person name="Hegde R."/>
            <person name="Ye Y."/>
        </authorList>
    </citation>
    <scope>FUNCTION</scope>
    <scope>SUBCELLULAR LOCATION</scope>
</reference>
<reference key="12">
    <citation type="journal article" date="2011" name="Nature">
        <title>Protein targeting and degradation are coupled for elimination of mislocalized proteins.</title>
        <authorList>
            <person name="Hessa T."/>
            <person name="Sharma A."/>
            <person name="Mariappan M."/>
            <person name="Eshleman H.D."/>
            <person name="Gutierrez E."/>
            <person name="Hegde R.S."/>
        </authorList>
    </citation>
    <scope>FUNCTION</scope>
</reference>
<reference key="13">
    <citation type="journal article" date="2012" name="Proc. Natl. Acad. Sci. U.S.A.">
        <title>N-terminal acetylome analyses and functional insights of the N-terminal acetyltransferase NatB.</title>
        <authorList>
            <person name="Van Damme P."/>
            <person name="Lasa M."/>
            <person name="Polevoda B."/>
            <person name="Gazquez C."/>
            <person name="Elosegui-Artola A."/>
            <person name="Kim D.S."/>
            <person name="De Juan-Pardo E."/>
            <person name="Demeyer K."/>
            <person name="Hole K."/>
            <person name="Larrea E."/>
            <person name="Timmerman E."/>
            <person name="Prieto J."/>
            <person name="Arnesen T."/>
            <person name="Sherman F."/>
            <person name="Gevaert K."/>
            <person name="Aldabe R."/>
        </authorList>
    </citation>
    <scope>IDENTIFICATION BY MASS SPECTROMETRY [LARGE SCALE ANALYSIS]</scope>
</reference>
<reference key="14">
    <citation type="journal article" date="2013" name="J. Proteome Res.">
        <title>Toward a comprehensive characterization of a human cancer cell phosphoproteome.</title>
        <authorList>
            <person name="Zhou H."/>
            <person name="Di Palma S."/>
            <person name="Preisinger C."/>
            <person name="Peng M."/>
            <person name="Polat A.N."/>
            <person name="Heck A.J."/>
            <person name="Mohammed S."/>
        </authorList>
    </citation>
    <scope>PHOSPHORYLATION [LARGE SCALE ANALYSIS] AT SER-90</scope>
    <scope>IDENTIFICATION BY MASS SPECTROMETRY [LARGE SCALE ANALYSIS]</scope>
    <source>
        <tissue>Cervix carcinoma</tissue>
        <tissue>Erythroleukemia</tissue>
    </source>
</reference>
<reference key="15">
    <citation type="journal article" date="2014" name="Elife">
        <title>USP13 antagonizes gp78 to maintain functionality of a chaperone in ER-associated degradation.</title>
        <authorList>
            <person name="Liu Y."/>
            <person name="Soetandyo N."/>
            <person name="Lee J.G."/>
            <person name="Liu L."/>
            <person name="Xu Y."/>
            <person name="Clemons W.M. Jr."/>
            <person name="Ye Y."/>
        </authorList>
    </citation>
    <scope>INTERACTION WITH USP13</scope>
    <scope>UBIQUITINATION AT LYS-48 BY AMFR</scope>
    <scope>DEUBIQUITINATION BY USP13</scope>
    <scope>MUTAGENESIS OF LYS-48</scope>
</reference>
<reference key="16">
    <citation type="journal article" date="2017" name="Science">
        <title>Mechanistic basis for a molecular triage reaction.</title>
        <authorList>
            <person name="Shao S."/>
            <person name="Rodrigo-Brenni M.C."/>
            <person name="Kivlen M.H."/>
            <person name="Hegde R.S."/>
        </authorList>
    </citation>
    <scope>FUNCTION</scope>
</reference>
<reference key="17">
    <citation type="submission" date="2007-03" db="PDB data bank">
        <title>Solution structure of the N-terminal ubiquitin-like domain in human ubiquitin-like protein 4A (GDX).</title>
        <authorList>
            <consortium name="RIKEN structural genomics initiative (RSGI)"/>
        </authorList>
    </citation>
    <scope>STRUCTURE BY NMR OF 1-74</scope>
</reference>
<reference evidence="13" key="18">
    <citation type="journal article" date="2015" name="J. Biol. Chem.">
        <title>Structure of a BAG6 (Bcl-2-associated athanogene 6)-Ubl4a (ubiquitin-like protein 4a) complex reveals a novel binding interface that functions in tail-anchored protein biogenesis.</title>
        <authorList>
            <person name="Kuwabara N."/>
            <person name="Minami R."/>
            <person name="Yokota N."/>
            <person name="Matsumoto H."/>
            <person name="Senda T."/>
            <person name="Kawahara H."/>
            <person name="Kato R."/>
        </authorList>
    </citation>
    <scope>X-RAY CRYSTALLOGRAPHY (1.85 ANGSTROMS) OF 95-147 IN COMPLEX WITH BAG6</scope>
    <scope>INTERACTION WITH BAG6</scope>
    <scope>MUTAGENESIS OF VAL-102; ARG-105; HIS-106; PHE-107; TYR-123 AND LEU-130</scope>
</reference>
<reference evidence="12" key="19">
    <citation type="journal article" date="2015" name="Proc. Natl. Acad. Sci. U.S.A.">
        <title>Bag6 complex contains a minimal tail-anchor-targeting module and a mock BAG domain.</title>
        <authorList>
            <person name="Mock J.Y."/>
            <person name="Chartron J.W."/>
            <person name="Zaslaver M."/>
            <person name="Xu Y."/>
            <person name="Ye Y."/>
            <person name="Clemons W.M. Jr."/>
        </authorList>
    </citation>
    <scope>X-RAY CRYSTALLOGRAPHY (2.00 ANGSTROMS) OF 93-139 IN COMPLEX WITH BAG6</scope>
    <scope>INTERACTION WITH BAG6</scope>
    <scope>IDENTIFICATION IN THE BAG6/BAT3 COMPLEX</scope>
    <scope>MUTAGENESIS OF LEU-43</scope>
    <scope>FUNCTION</scope>
</reference>
<reference evidence="14 15 16" key="20">
    <citation type="journal article" date="2021" name="Nat. Struct. Mol. Biol.">
        <title>Structural insights into metazoan pretargeting GET complexes.</title>
        <authorList>
            <person name="Keszei A.F.A."/>
            <person name="Yip M.C.J."/>
            <person name="Hsieh T.C."/>
            <person name="Shao S."/>
        </authorList>
    </citation>
    <scope>STRUCTURE BY ELECTRON MICROSCOPY (3.30 ANGSTROMS) IN COMPLEX WITH BAG6; GET4 AND GET3</scope>
</reference>
<sequence>MQLTVKALQGRECSLQVPEDELVSTLKQLVSEKLNVPVRQQRLLFKGKALADGKRLSDYSIGPNSKLNLVVKPLEKVLLEEGEAQRLADSPPPQVWQLISKVLARHFSAADASRVLEQLQRDYERSLSRLTLDDIERLASRFLHPEVTETMEKGFSK</sequence>
<organism>
    <name type="scientific">Homo sapiens</name>
    <name type="common">Human</name>
    <dbReference type="NCBI Taxonomy" id="9606"/>
    <lineage>
        <taxon>Eukaryota</taxon>
        <taxon>Metazoa</taxon>
        <taxon>Chordata</taxon>
        <taxon>Craniata</taxon>
        <taxon>Vertebrata</taxon>
        <taxon>Euteleostomi</taxon>
        <taxon>Mammalia</taxon>
        <taxon>Eutheria</taxon>
        <taxon>Euarchontoglires</taxon>
        <taxon>Primates</taxon>
        <taxon>Haplorrhini</taxon>
        <taxon>Catarrhini</taxon>
        <taxon>Hominidae</taxon>
        <taxon>Homo</taxon>
    </lineage>
</organism>
<keyword id="KW-0002">3D-structure</keyword>
<keyword id="KW-0963">Cytoplasm</keyword>
<keyword id="KW-1017">Isopeptide bond</keyword>
<keyword id="KW-0539">Nucleus</keyword>
<keyword id="KW-0597">Phosphoprotein</keyword>
<keyword id="KW-1267">Proteomics identification</keyword>
<keyword id="KW-1185">Reference proteome</keyword>
<keyword id="KW-0813">Transport</keyword>
<keyword id="KW-0832">Ubl conjugation</keyword>
<comment type="function">
    <text evidence="2 3 4 6 8">As part of a cytosolic protein quality control complex, the BAG6/BAT3 complex, maintains misfolded and hydrophobic patches-containing proteins in a soluble state and participates in their proper delivery to the endoplasmic reticulum or alternatively can promote their sorting to the proteasome where they undergo degradation (PubMed:20676083, PubMed:21636303, PubMed:21743475, PubMed:28104892). The BAG6/BAT3 complex is involved in the post-translational delivery of tail-anchored/type II transmembrane proteins to the endoplasmic reticulum membrane. Recruited to ribosomes, it interacts with the transmembrane region of newly synthesized tail-anchored proteins and together with SGTA and ASNA1 mediates their delivery to the endoplasmic reticulum (PubMed:20676083, PubMed:25535373, PubMed:28104892). Client proteins that cannot be properly delivered to the endoplasmic reticulum are ubiquitinated and sorted to the proteasome (PubMed:28104892). Similarly, the BAG6/BAT3 complex also functions as a sorting platform for proteins of the secretory pathway that are mislocalized to the cytosol either delivering them to the proteasome for degradation or to the endoplasmic reticulum (PubMed:21743475). The BAG6/BAT3 complex also plays a role in the endoplasmic reticulum-associated degradation (ERAD), a quality control mechanism that eliminates unwanted proteins of the endoplasmic reticulum through their retrotranslocation to the cytosol and their targeting to the proteasome. It maintains these retrotranslocated proteins in an unfolded yet soluble state condition in the cytosol to ensure their proper delivery to the proteasome (PubMed:21636303).</text>
</comment>
<comment type="subunit">
    <text evidence="2 5 6 7 9">Component of the BAG6/BAT3 complex, at least composed of BAG6, UBL4A and GET4/TRC35 (PubMed:20676083, PubMed:25535373, PubMed:34887561). Interacts with BAG6; the interaction is direct and required for UBL4A protein stability (PubMed:25535373, PubMed:25713138). Interacts with USP13; may be indirect via BAG6 (PubMed:24424410).</text>
</comment>
<comment type="interaction">
    <interactant intactId="EBI-356983">
        <id>P11441</id>
    </interactant>
    <interactant intactId="EBI-5278764">
        <id>Q96GN5</id>
        <label>CDCA7L</label>
    </interactant>
    <organismsDiffer>false</organismsDiffer>
    <experiments>3</experiments>
</comment>
<comment type="interaction">
    <interactant intactId="EBI-356983">
        <id>P11441</id>
    </interactant>
    <interactant intactId="EBI-25837549">
        <id>P28329-3</id>
        <label>CHAT</label>
    </interactant>
    <organismsDiffer>false</organismsDiffer>
    <experiments>3</experiments>
</comment>
<comment type="interaction">
    <interactant intactId="EBI-356983">
        <id>P11441</id>
    </interactant>
    <interactant intactId="EBI-953772">
        <id>Q96DN0</id>
        <label>ERP27</label>
    </interactant>
    <organismsDiffer>false</organismsDiffer>
    <experiments>3</experiments>
</comment>
<comment type="interaction">
    <interactant intactId="EBI-356983">
        <id>P11441</id>
    </interactant>
    <interactant intactId="EBI-348399">
        <id>P22607</id>
        <label>FGFR3</label>
    </interactant>
    <organismsDiffer>false</organismsDiffer>
    <experiments>3</experiments>
</comment>
<comment type="interaction">
    <interactant intactId="EBI-356983">
        <id>P11441</id>
    </interactant>
    <interactant intactId="EBI-748397">
        <id>P50222</id>
        <label>MEOX2</label>
    </interactant>
    <organismsDiffer>false</organismsDiffer>
    <experiments>3</experiments>
</comment>
<comment type="interaction">
    <interactant intactId="EBI-356983">
        <id>P11441</id>
    </interactant>
    <interactant intactId="EBI-1054296">
        <id>O15055</id>
        <label>PER2</label>
    </interactant>
    <organismsDiffer>false</organismsDiffer>
    <experiments>3</experiments>
</comment>
<comment type="interaction">
    <interactant intactId="EBI-356983">
        <id>P11441</id>
    </interactant>
    <interactant intactId="EBI-743700">
        <id>P25815</id>
        <label>S100P</label>
    </interactant>
    <organismsDiffer>false</organismsDiffer>
    <experiments>3</experiments>
</comment>
<comment type="interaction">
    <interactant intactId="EBI-356983">
        <id>P11441</id>
    </interactant>
    <interactant intactId="EBI-347996">
        <id>O43765</id>
        <label>SGTA</label>
    </interactant>
    <organismsDiffer>false</organismsDiffer>
    <experiments>5</experiments>
</comment>
<comment type="interaction">
    <interactant intactId="EBI-356983">
        <id>P11441</id>
    </interactant>
    <interactant intactId="EBI-744081">
        <id>Q96EQ0</id>
        <label>SGTB</label>
    </interactant>
    <organismsDiffer>false</organismsDiffer>
    <experiments>4</experiments>
</comment>
<comment type="interaction">
    <interactant intactId="EBI-356983">
        <id>P11441</id>
    </interactant>
    <interactant intactId="EBI-3650647">
        <id>Q9BUZ4</id>
        <label>TRAF4</label>
    </interactant>
    <organismsDiffer>false</organismsDiffer>
    <experiments>6</experiments>
</comment>
<comment type="interaction">
    <interactant intactId="EBI-356983">
        <id>P11441</id>
    </interactant>
    <interactant intactId="EBI-2130429">
        <id>Q9BYV2</id>
        <label>TRIM54</label>
    </interactant>
    <organismsDiffer>false</organismsDiffer>
    <experiments>3</experiments>
</comment>
<comment type="interaction">
    <interactant intactId="EBI-356983">
        <id>P11441</id>
    </interactant>
    <interactant intactId="EBI-779991">
        <id>P12504</id>
        <label>vif</label>
    </interactant>
    <organismsDiffer>true</organismsDiffer>
    <experiments>2</experiments>
</comment>
<comment type="subcellular location">
    <subcellularLocation>
        <location evidence="2 3">Cytoplasm</location>
        <location evidence="2 3">Cytosol</location>
    </subcellularLocation>
    <subcellularLocation>
        <location evidence="3">Nucleus</location>
    </subcellularLocation>
</comment>
<comment type="PTM">
    <text evidence="5">Polyubiquitinated. Ubiquitination by AMFR and deubiquitination by USP13 may regulate the interaction between the BAG6/BAT3 complex and SGTA and therefore may regulate client proteins fate.</text>
</comment>
<gene>
    <name evidence="11" type="primary">UBL4A</name>
    <name type="synonym">DXS254E</name>
    <name type="synonym">GDX</name>
    <name type="synonym">UBL4</name>
</gene>
<accession>P11441</accession>
<accession>Q5HY80</accession>
<evidence type="ECO:0000255" key="1">
    <source>
        <dbReference type="PROSITE-ProRule" id="PRU00214"/>
    </source>
</evidence>
<evidence type="ECO:0000269" key="2">
    <source>
    </source>
</evidence>
<evidence type="ECO:0000269" key="3">
    <source>
    </source>
</evidence>
<evidence type="ECO:0000269" key="4">
    <source>
    </source>
</evidence>
<evidence type="ECO:0000269" key="5">
    <source>
    </source>
</evidence>
<evidence type="ECO:0000269" key="6">
    <source>
    </source>
</evidence>
<evidence type="ECO:0000269" key="7">
    <source>
    </source>
</evidence>
<evidence type="ECO:0000269" key="8">
    <source>
    </source>
</evidence>
<evidence type="ECO:0000269" key="9">
    <source>
    </source>
</evidence>
<evidence type="ECO:0000305" key="10"/>
<evidence type="ECO:0000312" key="11">
    <source>
        <dbReference type="HGNC" id="HGNC:12505"/>
    </source>
</evidence>
<evidence type="ECO:0007744" key="12">
    <source>
        <dbReference type="PDB" id="4WWR"/>
    </source>
</evidence>
<evidence type="ECO:0007744" key="13">
    <source>
        <dbReference type="PDB" id="4X86"/>
    </source>
</evidence>
<evidence type="ECO:0007744" key="14">
    <source>
        <dbReference type="PDB" id="7RU9"/>
    </source>
</evidence>
<evidence type="ECO:0007744" key="15">
    <source>
        <dbReference type="PDB" id="7RUA"/>
    </source>
</evidence>
<evidence type="ECO:0007744" key="16">
    <source>
        <dbReference type="PDB" id="7RUC"/>
    </source>
</evidence>
<evidence type="ECO:0007744" key="17">
    <source>
    </source>
</evidence>
<evidence type="ECO:0007744" key="18">
    <source>
    </source>
</evidence>
<evidence type="ECO:0007744" key="19">
    <source>
    </source>
</evidence>
<evidence type="ECO:0007744" key="20">
    <source>
    </source>
</evidence>
<evidence type="ECO:0007829" key="21">
    <source>
        <dbReference type="PDB" id="2DZI"/>
    </source>
</evidence>
<evidence type="ECO:0007829" key="22">
    <source>
        <dbReference type="PDB" id="4X86"/>
    </source>
</evidence>
<protein>
    <recommendedName>
        <fullName evidence="10">Ubiquitin-like protein 4A</fullName>
    </recommendedName>
    <alternativeName>
        <fullName>Ubiquitin-like protein GDX</fullName>
    </alternativeName>
</protein>
<dbReference type="EMBL" id="J03589">
    <property type="protein sequence ID" value="AAA36790.1"/>
    <property type="molecule type" value="Genomic_DNA"/>
</dbReference>
<dbReference type="EMBL" id="L44140">
    <property type="protein sequence ID" value="AAA92650.1"/>
    <property type="molecule type" value="Genomic_DNA"/>
</dbReference>
<dbReference type="EMBL" id="BX664739">
    <property type="status" value="NOT_ANNOTATED_CDS"/>
    <property type="molecule type" value="Genomic_DNA"/>
</dbReference>
<dbReference type="EMBL" id="CH471172">
    <property type="protein sequence ID" value="EAW72700.1"/>
    <property type="molecule type" value="Genomic_DNA"/>
</dbReference>
<dbReference type="EMBL" id="BC043346">
    <property type="protein sequence ID" value="AAH43346.1"/>
    <property type="molecule type" value="mRNA"/>
</dbReference>
<dbReference type="EMBL" id="BC053589">
    <property type="protein sequence ID" value="AAH53589.1"/>
    <property type="molecule type" value="mRNA"/>
</dbReference>
<dbReference type="CCDS" id="CCDS14754.1"/>
<dbReference type="PIR" id="A31084">
    <property type="entry name" value="A31084"/>
</dbReference>
<dbReference type="RefSeq" id="NP_055050.1">
    <property type="nucleotide sequence ID" value="NM_014235.5"/>
</dbReference>
<dbReference type="PDB" id="2DZI">
    <property type="method" value="NMR"/>
    <property type="chains" value="A=1-74"/>
</dbReference>
<dbReference type="PDB" id="4WWR">
    <property type="method" value="X-ray"/>
    <property type="resolution" value="2.00 A"/>
    <property type="chains" value="B/D/F/H=93-139"/>
</dbReference>
<dbReference type="PDB" id="4X86">
    <property type="method" value="X-ray"/>
    <property type="resolution" value="1.85 A"/>
    <property type="chains" value="A=95-147"/>
</dbReference>
<dbReference type="PDB" id="7RU9">
    <property type="method" value="EM"/>
    <property type="resolution" value="3.30 A"/>
    <property type="chains" value="E/H=1-157"/>
</dbReference>
<dbReference type="PDB" id="7RUA">
    <property type="method" value="EM"/>
    <property type="resolution" value="3.40 A"/>
    <property type="chains" value="E/H=1-157"/>
</dbReference>
<dbReference type="PDB" id="7RUC">
    <property type="method" value="EM"/>
    <property type="resolution" value="3.60 A"/>
    <property type="chains" value="H=1-157"/>
</dbReference>
<dbReference type="PDBsum" id="2DZI"/>
<dbReference type="PDBsum" id="4WWR"/>
<dbReference type="PDBsum" id="4X86"/>
<dbReference type="PDBsum" id="7RU9"/>
<dbReference type="PDBsum" id="7RUA"/>
<dbReference type="PDBsum" id="7RUC"/>
<dbReference type="BMRB" id="P11441"/>
<dbReference type="EMDB" id="EMD-24700"/>
<dbReference type="EMDB" id="EMD-24701"/>
<dbReference type="EMDB" id="EMD-24702"/>
<dbReference type="SMR" id="P11441"/>
<dbReference type="BioGRID" id="113885">
    <property type="interactions" value="389"/>
</dbReference>
<dbReference type="ComplexPortal" id="CPX-132">
    <property type="entry name" value="BAT3 complex"/>
</dbReference>
<dbReference type="CORUM" id="P11441"/>
<dbReference type="FunCoup" id="P11441">
    <property type="interactions" value="2208"/>
</dbReference>
<dbReference type="IntAct" id="P11441">
    <property type="interactions" value="76"/>
</dbReference>
<dbReference type="MINT" id="P11441"/>
<dbReference type="STRING" id="9606.ENSP00000358674"/>
<dbReference type="iPTMnet" id="P11441"/>
<dbReference type="MetOSite" id="P11441"/>
<dbReference type="PhosphoSitePlus" id="P11441"/>
<dbReference type="BioMuta" id="UBL4A"/>
<dbReference type="DMDM" id="136662"/>
<dbReference type="jPOST" id="P11441"/>
<dbReference type="MassIVE" id="P11441"/>
<dbReference type="PaxDb" id="9606-ENSP00000358674"/>
<dbReference type="PeptideAtlas" id="P11441"/>
<dbReference type="ProteomicsDB" id="52774"/>
<dbReference type="Pumba" id="P11441"/>
<dbReference type="Antibodypedia" id="504">
    <property type="antibodies" value="233 antibodies from 26 providers"/>
</dbReference>
<dbReference type="DNASU" id="8266"/>
<dbReference type="Ensembl" id="ENST00000369660.9">
    <property type="protein sequence ID" value="ENSP00000358674.4"/>
    <property type="gene ID" value="ENSG00000102178.13"/>
</dbReference>
<dbReference type="GeneID" id="8266"/>
<dbReference type="KEGG" id="hsa:8266"/>
<dbReference type="MANE-Select" id="ENST00000369660.9">
    <property type="protein sequence ID" value="ENSP00000358674.4"/>
    <property type="RefSeq nucleotide sequence ID" value="NM_014235.5"/>
    <property type="RefSeq protein sequence ID" value="NP_055050.1"/>
</dbReference>
<dbReference type="UCSC" id="uc004flo.4">
    <property type="organism name" value="human"/>
</dbReference>
<dbReference type="AGR" id="HGNC:12505"/>
<dbReference type="CTD" id="8266"/>
<dbReference type="DisGeNET" id="8266"/>
<dbReference type="GeneCards" id="UBL4A"/>
<dbReference type="HGNC" id="HGNC:12505">
    <property type="gene designation" value="UBL4A"/>
</dbReference>
<dbReference type="HPA" id="ENSG00000102178">
    <property type="expression patterns" value="Low tissue specificity"/>
</dbReference>
<dbReference type="MIM" id="312070">
    <property type="type" value="gene"/>
</dbReference>
<dbReference type="neXtProt" id="NX_P11441"/>
<dbReference type="OpenTargets" id="ENSG00000102178"/>
<dbReference type="PharmGKB" id="PA37152"/>
<dbReference type="VEuPathDB" id="HostDB:ENSG00000102178"/>
<dbReference type="eggNOG" id="KOG0001">
    <property type="taxonomic scope" value="Eukaryota"/>
</dbReference>
<dbReference type="GeneTree" id="ENSGT00730000111022"/>
<dbReference type="HOGENOM" id="CLU_119809_0_0_1"/>
<dbReference type="InParanoid" id="P11441"/>
<dbReference type="OMA" id="SMDTSYM"/>
<dbReference type="OrthoDB" id="417450at2759"/>
<dbReference type="PAN-GO" id="P11441">
    <property type="GO annotations" value="4 GO annotations based on evolutionary models"/>
</dbReference>
<dbReference type="PhylomeDB" id="P11441"/>
<dbReference type="TreeFam" id="TF354228"/>
<dbReference type="PathwayCommons" id="P11441"/>
<dbReference type="Reactome" id="R-HSA-9609523">
    <property type="pathway name" value="Insertion of tail-anchored proteins into the endoplasmic reticulum membrane"/>
</dbReference>
<dbReference type="SignaLink" id="P11441"/>
<dbReference type="SIGNOR" id="P11441"/>
<dbReference type="BioGRID-ORCS" id="8266">
    <property type="hits" value="11 hits in 782 CRISPR screens"/>
</dbReference>
<dbReference type="CD-CODE" id="DEE660B4">
    <property type="entry name" value="Stress granule"/>
</dbReference>
<dbReference type="CD-CODE" id="FB4E32DD">
    <property type="entry name" value="Presynaptic clusters and postsynaptic densities"/>
</dbReference>
<dbReference type="ChiTaRS" id="UBL4A">
    <property type="organism name" value="human"/>
</dbReference>
<dbReference type="EvolutionaryTrace" id="P11441"/>
<dbReference type="GeneWiki" id="UBL4A"/>
<dbReference type="GenomeRNAi" id="8266"/>
<dbReference type="Pharos" id="P11441">
    <property type="development level" value="Tbio"/>
</dbReference>
<dbReference type="PRO" id="PR:P11441"/>
<dbReference type="Proteomes" id="UP000005640">
    <property type="component" value="Chromosome X"/>
</dbReference>
<dbReference type="RNAct" id="P11441">
    <property type="molecule type" value="protein"/>
</dbReference>
<dbReference type="Bgee" id="ENSG00000102178">
    <property type="expression patterns" value="Expressed in hindlimb stylopod muscle and 185 other cell types or tissues"/>
</dbReference>
<dbReference type="ExpressionAtlas" id="P11441">
    <property type="expression patterns" value="baseline and differential"/>
</dbReference>
<dbReference type="GO" id="GO:0071818">
    <property type="term" value="C:BAT3 complex"/>
    <property type="evidence" value="ECO:0000314"/>
    <property type="project" value="UniProtKB"/>
</dbReference>
<dbReference type="GO" id="GO:0005737">
    <property type="term" value="C:cytoplasm"/>
    <property type="evidence" value="ECO:0000314"/>
    <property type="project" value="ParkinsonsUK-UCL"/>
</dbReference>
<dbReference type="GO" id="GO:0005829">
    <property type="term" value="C:cytosol"/>
    <property type="evidence" value="ECO:0000314"/>
    <property type="project" value="UniProtKB"/>
</dbReference>
<dbReference type="GO" id="GO:0016020">
    <property type="term" value="C:membrane"/>
    <property type="evidence" value="ECO:0000314"/>
    <property type="project" value="ParkinsonsUK-UCL"/>
</dbReference>
<dbReference type="GO" id="GO:0005654">
    <property type="term" value="C:nucleoplasm"/>
    <property type="evidence" value="ECO:0000314"/>
    <property type="project" value="HPA"/>
</dbReference>
<dbReference type="GO" id="GO:0005634">
    <property type="term" value="C:nucleus"/>
    <property type="evidence" value="ECO:0000314"/>
    <property type="project" value="ParkinsonsUK-UCL"/>
</dbReference>
<dbReference type="GO" id="GO:0051087">
    <property type="term" value="F:protein-folding chaperone binding"/>
    <property type="evidence" value="ECO:0000353"/>
    <property type="project" value="BHF-UCL"/>
</dbReference>
<dbReference type="GO" id="GO:0019787">
    <property type="term" value="F:ubiquitin-like protein transferase activity"/>
    <property type="evidence" value="ECO:0000304"/>
    <property type="project" value="ProtInc"/>
</dbReference>
<dbReference type="GO" id="GO:0006620">
    <property type="term" value="P:post-translational protein targeting to endoplasmic reticulum membrane"/>
    <property type="evidence" value="ECO:0000314"/>
    <property type="project" value="ComplexPortal"/>
</dbReference>
<dbReference type="GO" id="GO:0036211">
    <property type="term" value="P:protein modification process"/>
    <property type="evidence" value="ECO:0000304"/>
    <property type="project" value="ProtInc"/>
</dbReference>
<dbReference type="GO" id="GO:0031647">
    <property type="term" value="P:regulation of protein stability"/>
    <property type="evidence" value="ECO:0000314"/>
    <property type="project" value="ComplexPortal"/>
</dbReference>
<dbReference type="GO" id="GO:0071816">
    <property type="term" value="P:tail-anchored membrane protein insertion into ER membrane"/>
    <property type="evidence" value="ECO:0000314"/>
    <property type="project" value="UniProtKB"/>
</dbReference>
<dbReference type="GO" id="GO:0006511">
    <property type="term" value="P:ubiquitin-dependent protein catabolic process"/>
    <property type="evidence" value="ECO:0000314"/>
    <property type="project" value="ComplexPortal"/>
</dbReference>
<dbReference type="CDD" id="cd01807">
    <property type="entry name" value="Ubl_UBL4A_like"/>
    <property type="match status" value="1"/>
</dbReference>
<dbReference type="FunFam" id="3.10.20.90:FF:000144">
    <property type="entry name" value="Ubiquitin-like protein 4A"/>
    <property type="match status" value="1"/>
</dbReference>
<dbReference type="Gene3D" id="3.10.20.90">
    <property type="entry name" value="Phosphatidylinositol 3-kinase Catalytic Subunit, Chain A, domain 1"/>
    <property type="match status" value="1"/>
</dbReference>
<dbReference type="InterPro" id="IPR000626">
    <property type="entry name" value="Ubiquitin-like_dom"/>
</dbReference>
<dbReference type="InterPro" id="IPR029071">
    <property type="entry name" value="Ubiquitin-like_domsf"/>
</dbReference>
<dbReference type="InterPro" id="IPR019954">
    <property type="entry name" value="Ubiquitin_CS"/>
</dbReference>
<dbReference type="InterPro" id="IPR019956">
    <property type="entry name" value="Ubiquitin_dom"/>
</dbReference>
<dbReference type="InterPro" id="IPR041421">
    <property type="entry name" value="Ubl4_C_TUGS"/>
</dbReference>
<dbReference type="InterPro" id="IPR047154">
    <property type="entry name" value="UBL4A-like"/>
</dbReference>
<dbReference type="InterPro" id="IPR044724">
    <property type="entry name" value="Ubl_UBL4A-like"/>
</dbReference>
<dbReference type="PANTHER" id="PTHR46555">
    <property type="entry name" value="UBIQUITIN-LIKE PROTEIN 4A"/>
    <property type="match status" value="1"/>
</dbReference>
<dbReference type="PANTHER" id="PTHR46555:SF1">
    <property type="entry name" value="UBIQUITIN-LIKE PROTEIN 4A"/>
    <property type="match status" value="1"/>
</dbReference>
<dbReference type="Pfam" id="PF17840">
    <property type="entry name" value="Tugs"/>
    <property type="match status" value="1"/>
</dbReference>
<dbReference type="Pfam" id="PF00240">
    <property type="entry name" value="ubiquitin"/>
    <property type="match status" value="1"/>
</dbReference>
<dbReference type="PRINTS" id="PR00348">
    <property type="entry name" value="UBIQUITIN"/>
</dbReference>
<dbReference type="SMART" id="SM00213">
    <property type="entry name" value="UBQ"/>
    <property type="match status" value="1"/>
</dbReference>
<dbReference type="SUPFAM" id="SSF54236">
    <property type="entry name" value="Ubiquitin-like"/>
    <property type="match status" value="1"/>
</dbReference>
<dbReference type="PROSITE" id="PS00299">
    <property type="entry name" value="UBIQUITIN_1"/>
    <property type="match status" value="1"/>
</dbReference>
<dbReference type="PROSITE" id="PS50053">
    <property type="entry name" value="UBIQUITIN_2"/>
    <property type="match status" value="1"/>
</dbReference>
<proteinExistence type="evidence at protein level"/>
<feature type="chain" id="PRO_0000114864" description="Ubiquitin-like protein 4A">
    <location>
        <begin position="1"/>
        <end position="157"/>
    </location>
</feature>
<feature type="domain" description="Ubiquitin-like" evidence="1">
    <location>
        <begin position="1"/>
        <end position="76"/>
    </location>
</feature>
<feature type="region of interest" description="Required and sufficient for interaction with BAG6" evidence="6 7">
    <location>
        <begin position="96"/>
        <end position="138"/>
    </location>
</feature>
<feature type="modified residue" description="Phosphoserine" evidence="17 18 19 20">
    <location>
        <position position="90"/>
    </location>
</feature>
<feature type="cross-link" description="Glycyl lysine isopeptide (Lys-Gly) (interchain with G-Cter in ubiquitin)" evidence="5">
    <location>
        <position position="48"/>
    </location>
</feature>
<feature type="mutagenesis site" description="Reduces tail-anchored proteins delivery." evidence="6">
    <original>L</original>
    <variation>A</variation>
    <location>
        <position position="43"/>
    </location>
</feature>
<feature type="mutagenesis site" description="Loss of polyubiquitination by AMFR." evidence="5">
    <original>K</original>
    <variation>R</variation>
    <location>
        <position position="48"/>
    </location>
</feature>
<feature type="mutagenesis site" description="No effect on interaction with BAG6." evidence="7">
    <original>V</original>
    <variation>E</variation>
    <variation>K</variation>
    <location>
        <position position="102"/>
    </location>
</feature>
<feature type="mutagenesis site" description="No effect on interaction with BAG6." evidence="7">
    <original>R</original>
    <variation>E</variation>
    <location>
        <position position="105"/>
    </location>
</feature>
<feature type="mutagenesis site" description="Strongly inhibits interaction with BAG6." evidence="7">
    <original>H</original>
    <variation>E</variation>
    <location>
        <position position="106"/>
    </location>
</feature>
<feature type="mutagenesis site" description="Strongly inhibits interaction with BAG6." evidence="7">
    <original>F</original>
    <variation>E</variation>
    <variation>K</variation>
    <location>
        <position position="107"/>
    </location>
</feature>
<feature type="mutagenesis site" description="No effect on interaction with BAG6." evidence="7">
    <original>Y</original>
    <variation>E</variation>
    <location>
        <position position="123"/>
    </location>
</feature>
<feature type="mutagenesis site" description="No effect on interaction with BAG6." evidence="7">
    <original>L</original>
    <variation>E</variation>
    <variation>K</variation>
    <location>
        <position position="130"/>
    </location>
</feature>
<feature type="strand" evidence="21">
    <location>
        <begin position="1"/>
        <end position="7"/>
    </location>
</feature>
<feature type="strand" evidence="21">
    <location>
        <begin position="12"/>
        <end position="17"/>
    </location>
</feature>
<feature type="helix" evidence="21">
    <location>
        <begin position="23"/>
        <end position="33"/>
    </location>
</feature>
<feature type="turn" evidence="21">
    <location>
        <begin position="38"/>
        <end position="40"/>
    </location>
</feature>
<feature type="strand" evidence="21">
    <location>
        <begin position="42"/>
        <end position="45"/>
    </location>
</feature>
<feature type="helix" evidence="21">
    <location>
        <begin position="56"/>
        <end position="59"/>
    </location>
</feature>
<feature type="strand" evidence="21">
    <location>
        <begin position="63"/>
        <end position="65"/>
    </location>
</feature>
<feature type="strand" evidence="21">
    <location>
        <begin position="68"/>
        <end position="70"/>
    </location>
</feature>
<feature type="helix" evidence="22">
    <location>
        <begin position="95"/>
        <end position="106"/>
    </location>
</feature>
<feature type="helix" evidence="22">
    <location>
        <begin position="109"/>
        <end position="129"/>
    </location>
</feature>
<feature type="helix" evidence="22">
    <location>
        <begin position="132"/>
        <end position="142"/>
    </location>
</feature>